<dbReference type="EMBL" id="AE008691">
    <property type="protein sequence ID" value="AAM25190.1"/>
    <property type="molecule type" value="Genomic_DNA"/>
</dbReference>
<dbReference type="RefSeq" id="WP_011026130.1">
    <property type="nucleotide sequence ID" value="NC_003869.1"/>
</dbReference>
<dbReference type="SMR" id="Q8R8I5"/>
<dbReference type="STRING" id="273068.TTE2012"/>
<dbReference type="KEGG" id="tte:TTE2012"/>
<dbReference type="eggNOG" id="COG2060">
    <property type="taxonomic scope" value="Bacteria"/>
</dbReference>
<dbReference type="HOGENOM" id="CLU_018614_3_0_9"/>
<dbReference type="OrthoDB" id="9763796at2"/>
<dbReference type="Proteomes" id="UP000000555">
    <property type="component" value="Chromosome"/>
</dbReference>
<dbReference type="GO" id="GO:0005886">
    <property type="term" value="C:plasma membrane"/>
    <property type="evidence" value="ECO:0007669"/>
    <property type="project" value="UniProtKB-SubCell"/>
</dbReference>
<dbReference type="GO" id="GO:0008556">
    <property type="term" value="F:P-type potassium transmembrane transporter activity"/>
    <property type="evidence" value="ECO:0007669"/>
    <property type="project" value="InterPro"/>
</dbReference>
<dbReference type="GO" id="GO:0030955">
    <property type="term" value="F:potassium ion binding"/>
    <property type="evidence" value="ECO:0007669"/>
    <property type="project" value="UniProtKB-UniRule"/>
</dbReference>
<dbReference type="HAMAP" id="MF_00275">
    <property type="entry name" value="KdpA"/>
    <property type="match status" value="1"/>
</dbReference>
<dbReference type="InterPro" id="IPR004623">
    <property type="entry name" value="KdpA"/>
</dbReference>
<dbReference type="NCBIfam" id="TIGR00680">
    <property type="entry name" value="kdpA"/>
    <property type="match status" value="1"/>
</dbReference>
<dbReference type="PANTHER" id="PTHR30607">
    <property type="entry name" value="POTASSIUM-TRANSPORTING ATPASE A CHAIN"/>
    <property type="match status" value="1"/>
</dbReference>
<dbReference type="PANTHER" id="PTHR30607:SF2">
    <property type="entry name" value="POTASSIUM-TRANSPORTING ATPASE POTASSIUM-BINDING SUBUNIT"/>
    <property type="match status" value="1"/>
</dbReference>
<dbReference type="Pfam" id="PF03814">
    <property type="entry name" value="KdpA"/>
    <property type="match status" value="1"/>
</dbReference>
<dbReference type="PIRSF" id="PIRSF001294">
    <property type="entry name" value="K_ATPaseA"/>
    <property type="match status" value="1"/>
</dbReference>
<keyword id="KW-1003">Cell membrane</keyword>
<keyword id="KW-0406">Ion transport</keyword>
<keyword id="KW-0472">Membrane</keyword>
<keyword id="KW-0630">Potassium</keyword>
<keyword id="KW-0633">Potassium transport</keyword>
<keyword id="KW-1185">Reference proteome</keyword>
<keyword id="KW-0812">Transmembrane</keyword>
<keyword id="KW-1133">Transmembrane helix</keyword>
<keyword id="KW-0813">Transport</keyword>
<feature type="chain" id="PRO_0000166538" description="Potassium-transporting ATPase potassium-binding subunit">
    <location>
        <begin position="1"/>
        <end position="561"/>
    </location>
</feature>
<feature type="transmembrane region" description="Helical" evidence="1">
    <location>
        <begin position="5"/>
        <end position="25"/>
    </location>
</feature>
<feature type="transmembrane region" description="Helical" evidence="1">
    <location>
        <begin position="63"/>
        <end position="83"/>
    </location>
</feature>
<feature type="transmembrane region" description="Helical" evidence="1">
    <location>
        <begin position="103"/>
        <end position="122"/>
    </location>
</feature>
<feature type="transmembrane region" description="Helical" evidence="1">
    <location>
        <begin position="133"/>
        <end position="153"/>
    </location>
</feature>
<feature type="transmembrane region" description="Helical" evidence="1">
    <location>
        <begin position="179"/>
        <end position="199"/>
    </location>
</feature>
<feature type="transmembrane region" description="Helical" evidence="1">
    <location>
        <begin position="255"/>
        <end position="275"/>
    </location>
</feature>
<feature type="transmembrane region" description="Helical" evidence="1">
    <location>
        <begin position="281"/>
        <end position="301"/>
    </location>
</feature>
<feature type="transmembrane region" description="Helical" evidence="1">
    <location>
        <begin position="380"/>
        <end position="400"/>
    </location>
</feature>
<feature type="transmembrane region" description="Helical" evidence="1">
    <location>
        <begin position="418"/>
        <end position="438"/>
    </location>
</feature>
<feature type="transmembrane region" description="Helical" evidence="1">
    <location>
        <begin position="485"/>
        <end position="505"/>
    </location>
</feature>
<feature type="transmembrane region" description="Helical" evidence="1">
    <location>
        <begin position="531"/>
        <end position="551"/>
    </location>
</feature>
<evidence type="ECO:0000255" key="1">
    <source>
        <dbReference type="HAMAP-Rule" id="MF_00275"/>
    </source>
</evidence>
<gene>
    <name evidence="1" type="primary">kdpA</name>
    <name type="ordered locus">TTE2012</name>
</gene>
<proteinExistence type="inferred from homology"/>
<protein>
    <recommendedName>
        <fullName evidence="1">Potassium-transporting ATPase potassium-binding subunit</fullName>
    </recommendedName>
    <alternativeName>
        <fullName evidence="1">ATP phosphohydrolase [potassium-transporting] A chain</fullName>
    </alternativeName>
    <alternativeName>
        <fullName evidence="1">Potassium-binding and translocating subunit A</fullName>
    </alternativeName>
    <alternativeName>
        <fullName evidence="1">Potassium-translocating ATPase A chain</fullName>
    </alternativeName>
</protein>
<sequence>MYSNIELFTMIAIIVLLTKPLGTYMYNIFEYKPMRSDKIFLPVENFIYKITGINPEEEMDWKKYALTFLLVNMVMMIITYFILRVQQFLPLNPTGAKNMESSLAFNTVISFMTNTNLQHYAGEDGITFLSQMIVIVFLMFTSAASGLVTAAAIMRGLSKKTTNLGNFYADFVRITVRLLLPISMLATLILVWQGVPQTFAGKVVVDTLEGGKQTIITGPVAVLESIKHLGTNGGGFFGANSSHPFENPTWLTNMIEMLLMMLLPTSLIYTYGLMINNKKHALVLYISLFVIFILLAVGAVYAENHPGVAYSKLHIYGKPYGNYEGKEVRFGVSQSPLFATVTTAFTTGSVDSMHDSYTPLGGAVPLILMMLNTIFGGDGAGLQNIIMYTILTVFLTGLMVGRTPEYLGRKIETKEIKLIALAILVHPFLILFSSALTVMLKVGASSVTNPLYHGLTQVLYEFSSAAANNGSEFAGFIGNTVFMNIMTGLVMFFGRYITIILMLAVAGSMAEKIPAPPSPGTFRTDNAIFGAIFIAVVLIVGALTFFPAVILGPISEFLSMT</sequence>
<accession>Q8R8I5</accession>
<name>KDPA_CALS4</name>
<reference key="1">
    <citation type="journal article" date="2002" name="Genome Res.">
        <title>A complete sequence of the T. tengcongensis genome.</title>
        <authorList>
            <person name="Bao Q."/>
            <person name="Tian Y."/>
            <person name="Li W."/>
            <person name="Xu Z."/>
            <person name="Xuan Z."/>
            <person name="Hu S."/>
            <person name="Dong W."/>
            <person name="Yang J."/>
            <person name="Chen Y."/>
            <person name="Xue Y."/>
            <person name="Xu Y."/>
            <person name="Lai X."/>
            <person name="Huang L."/>
            <person name="Dong X."/>
            <person name="Ma Y."/>
            <person name="Ling L."/>
            <person name="Tan H."/>
            <person name="Chen R."/>
            <person name="Wang J."/>
            <person name="Yu J."/>
            <person name="Yang H."/>
        </authorList>
    </citation>
    <scope>NUCLEOTIDE SEQUENCE [LARGE SCALE GENOMIC DNA]</scope>
    <source>
        <strain>DSM 15242 / JCM 11007 / NBRC 100824 / MB4</strain>
    </source>
</reference>
<organism>
    <name type="scientific">Caldanaerobacter subterraneus subsp. tengcongensis (strain DSM 15242 / JCM 11007 / NBRC 100824 / MB4)</name>
    <name type="common">Thermoanaerobacter tengcongensis</name>
    <dbReference type="NCBI Taxonomy" id="273068"/>
    <lineage>
        <taxon>Bacteria</taxon>
        <taxon>Bacillati</taxon>
        <taxon>Bacillota</taxon>
        <taxon>Clostridia</taxon>
        <taxon>Thermoanaerobacterales</taxon>
        <taxon>Thermoanaerobacteraceae</taxon>
        <taxon>Caldanaerobacter</taxon>
    </lineage>
</organism>
<comment type="function">
    <text evidence="1">Part of the high-affinity ATP-driven potassium transport (or Kdp) system, which catalyzes the hydrolysis of ATP coupled with the electrogenic transport of potassium into the cytoplasm. This subunit binds the extracellular potassium ions and delivers the ions to the membrane domain of KdpB through an intramembrane tunnel.</text>
</comment>
<comment type="subunit">
    <text evidence="1">The system is composed of three essential subunits: KdpA, KdpB and KdpC.</text>
</comment>
<comment type="subcellular location">
    <subcellularLocation>
        <location evidence="1">Cell membrane</location>
        <topology evidence="1">Multi-pass membrane protein</topology>
    </subcellularLocation>
</comment>
<comment type="similarity">
    <text evidence="1">Belongs to the KdpA family.</text>
</comment>